<dbReference type="EC" id="2.1.2.3" evidence="1"/>
<dbReference type="EC" id="3.5.4.10" evidence="1"/>
<dbReference type="EMBL" id="CP000768">
    <property type="protein sequence ID" value="ABS43426.1"/>
    <property type="molecule type" value="Genomic_DNA"/>
</dbReference>
<dbReference type="SMR" id="A7H375"/>
<dbReference type="KEGG" id="cjd:JJD26997_0828"/>
<dbReference type="HOGENOM" id="CLU_016316_5_2_7"/>
<dbReference type="UniPathway" id="UPA00074">
    <property type="reaction ID" value="UER00133"/>
</dbReference>
<dbReference type="UniPathway" id="UPA00074">
    <property type="reaction ID" value="UER00135"/>
</dbReference>
<dbReference type="Proteomes" id="UP000002302">
    <property type="component" value="Chromosome"/>
</dbReference>
<dbReference type="GO" id="GO:0005829">
    <property type="term" value="C:cytosol"/>
    <property type="evidence" value="ECO:0007669"/>
    <property type="project" value="TreeGrafter"/>
</dbReference>
<dbReference type="GO" id="GO:0003937">
    <property type="term" value="F:IMP cyclohydrolase activity"/>
    <property type="evidence" value="ECO:0007669"/>
    <property type="project" value="UniProtKB-UniRule"/>
</dbReference>
<dbReference type="GO" id="GO:0004643">
    <property type="term" value="F:phosphoribosylaminoimidazolecarboxamide formyltransferase activity"/>
    <property type="evidence" value="ECO:0007669"/>
    <property type="project" value="UniProtKB-UniRule"/>
</dbReference>
<dbReference type="GO" id="GO:0006189">
    <property type="term" value="P:'de novo' IMP biosynthetic process"/>
    <property type="evidence" value="ECO:0007669"/>
    <property type="project" value="UniProtKB-UniRule"/>
</dbReference>
<dbReference type="CDD" id="cd01421">
    <property type="entry name" value="IMPCH"/>
    <property type="match status" value="1"/>
</dbReference>
<dbReference type="FunFam" id="3.40.140.20:FF:000001">
    <property type="entry name" value="Bifunctional purine biosynthesis protein PurH"/>
    <property type="match status" value="1"/>
</dbReference>
<dbReference type="FunFam" id="3.40.50.1380:FF:000001">
    <property type="entry name" value="Bifunctional purine biosynthesis protein PurH"/>
    <property type="match status" value="1"/>
</dbReference>
<dbReference type="Gene3D" id="3.40.140.20">
    <property type="match status" value="2"/>
</dbReference>
<dbReference type="Gene3D" id="3.40.50.1380">
    <property type="entry name" value="Methylglyoxal synthase-like domain"/>
    <property type="match status" value="1"/>
</dbReference>
<dbReference type="HAMAP" id="MF_00139">
    <property type="entry name" value="PurH"/>
    <property type="match status" value="1"/>
</dbReference>
<dbReference type="InterPro" id="IPR024051">
    <property type="entry name" value="AICAR_Tfase_dup_dom_sf"/>
</dbReference>
<dbReference type="InterPro" id="IPR016193">
    <property type="entry name" value="Cytidine_deaminase-like"/>
</dbReference>
<dbReference type="InterPro" id="IPR011607">
    <property type="entry name" value="MGS-like_dom"/>
</dbReference>
<dbReference type="InterPro" id="IPR036914">
    <property type="entry name" value="MGS-like_dom_sf"/>
</dbReference>
<dbReference type="InterPro" id="IPR002695">
    <property type="entry name" value="PurH-like"/>
</dbReference>
<dbReference type="NCBIfam" id="NF002049">
    <property type="entry name" value="PRK00881.1"/>
    <property type="match status" value="1"/>
</dbReference>
<dbReference type="NCBIfam" id="TIGR00355">
    <property type="entry name" value="purH"/>
    <property type="match status" value="1"/>
</dbReference>
<dbReference type="PANTHER" id="PTHR11692:SF0">
    <property type="entry name" value="BIFUNCTIONAL PURINE BIOSYNTHESIS PROTEIN ATIC"/>
    <property type="match status" value="1"/>
</dbReference>
<dbReference type="PANTHER" id="PTHR11692">
    <property type="entry name" value="BIFUNCTIONAL PURINE BIOSYNTHESIS PROTEIN PURH"/>
    <property type="match status" value="1"/>
</dbReference>
<dbReference type="Pfam" id="PF01808">
    <property type="entry name" value="AICARFT_IMPCHas"/>
    <property type="match status" value="1"/>
</dbReference>
<dbReference type="Pfam" id="PF02142">
    <property type="entry name" value="MGS"/>
    <property type="match status" value="1"/>
</dbReference>
<dbReference type="PIRSF" id="PIRSF000414">
    <property type="entry name" value="AICARFT_IMPCHas"/>
    <property type="match status" value="1"/>
</dbReference>
<dbReference type="SMART" id="SM00798">
    <property type="entry name" value="AICARFT_IMPCHas"/>
    <property type="match status" value="1"/>
</dbReference>
<dbReference type="SMART" id="SM00851">
    <property type="entry name" value="MGS"/>
    <property type="match status" value="1"/>
</dbReference>
<dbReference type="SUPFAM" id="SSF53927">
    <property type="entry name" value="Cytidine deaminase-like"/>
    <property type="match status" value="1"/>
</dbReference>
<dbReference type="SUPFAM" id="SSF52335">
    <property type="entry name" value="Methylglyoxal synthase-like"/>
    <property type="match status" value="1"/>
</dbReference>
<dbReference type="PROSITE" id="PS51855">
    <property type="entry name" value="MGS"/>
    <property type="match status" value="1"/>
</dbReference>
<organism>
    <name type="scientific">Campylobacter jejuni subsp. doylei (strain ATCC BAA-1458 / RM4099 / 269.97)</name>
    <dbReference type="NCBI Taxonomy" id="360109"/>
    <lineage>
        <taxon>Bacteria</taxon>
        <taxon>Pseudomonadati</taxon>
        <taxon>Campylobacterota</taxon>
        <taxon>Epsilonproteobacteria</taxon>
        <taxon>Campylobacterales</taxon>
        <taxon>Campylobacteraceae</taxon>
        <taxon>Campylobacter</taxon>
    </lineage>
</organism>
<sequence length="510" mass="56599">MRALLSVSDKEGIVEFGKELENLGFEILSTGGTFKLLKENGVKVIEVSDFTKSPELFEGRVKTLHPKIHGGILHKRNDENHIKQAKENEILGIDLVCVNLYPFKKTTIMSDDFDEIIENIDIGGPAMIRSAAKNYKDVMVLCDRLDYEKVIETLKKNQNDENFRLSLMIKAYEYTANYDAYIANYMNERFNGGFGASKFIVGQKVFDTKYGENPHQKGALYEFDAFFSANFKALKGEASFNNLTDINAALNLASSFDKAPAIAIVKHGNSCGFAIKENLVQSYIHALKSDSVSAYGGVVAINGTLDEALANKINEIYVEVIIAANVDEKALAVFEGKKRIKIFTQESPFLIRSFDKYDFKHIDGGFVYQNSDEADEDELKNAKLMSQREASKEELKDLEIAMKIAAFTKSNNVVYVKNGAMVAIGMGMTSRIDAAKAATFKAKEMGLDLQGCVLASEAFFPFRDSIDEASKVGVKAIVEPGGSIRDDEVVKAADEYGMALYFTGVRHFLH</sequence>
<name>PUR9_CAMJD</name>
<reference key="1">
    <citation type="submission" date="2007-07" db="EMBL/GenBank/DDBJ databases">
        <title>Complete genome sequence of Campylobacter jejuni subsp doylei 269.97 isolated from human blood.</title>
        <authorList>
            <person name="Fouts D.E."/>
            <person name="Mongodin E.F."/>
            <person name="Puiu D."/>
            <person name="Sebastian Y."/>
            <person name="Miller W.G."/>
            <person name="Mandrell R.E."/>
            <person name="Lastovica A.J."/>
            <person name="Nelson K.E."/>
        </authorList>
    </citation>
    <scope>NUCLEOTIDE SEQUENCE [LARGE SCALE GENOMIC DNA]</scope>
    <source>
        <strain>ATCC BAA-1458 / RM4099 / 269.97</strain>
    </source>
</reference>
<protein>
    <recommendedName>
        <fullName evidence="1">Bifunctional purine biosynthesis protein PurH</fullName>
    </recommendedName>
    <domain>
        <recommendedName>
            <fullName evidence="1">Phosphoribosylaminoimidazolecarboxamide formyltransferase</fullName>
            <ecNumber evidence="1">2.1.2.3</ecNumber>
        </recommendedName>
        <alternativeName>
            <fullName evidence="1">AICAR transformylase</fullName>
        </alternativeName>
    </domain>
    <domain>
        <recommendedName>
            <fullName evidence="1">IMP cyclohydrolase</fullName>
            <ecNumber evidence="1">3.5.4.10</ecNumber>
        </recommendedName>
        <alternativeName>
            <fullName evidence="1">ATIC</fullName>
        </alternativeName>
        <alternativeName>
            <fullName evidence="1">IMP synthase</fullName>
        </alternativeName>
        <alternativeName>
            <fullName evidence="1">Inosinicase</fullName>
        </alternativeName>
    </domain>
</protein>
<accession>A7H375</accession>
<keyword id="KW-0378">Hydrolase</keyword>
<keyword id="KW-0511">Multifunctional enzyme</keyword>
<keyword id="KW-0658">Purine biosynthesis</keyword>
<keyword id="KW-0808">Transferase</keyword>
<gene>
    <name evidence="1" type="primary">purH</name>
    <name type="ordered locus">JJD26997_0828</name>
</gene>
<proteinExistence type="inferred from homology"/>
<evidence type="ECO:0000255" key="1">
    <source>
        <dbReference type="HAMAP-Rule" id="MF_00139"/>
    </source>
</evidence>
<evidence type="ECO:0000255" key="2">
    <source>
        <dbReference type="PROSITE-ProRule" id="PRU01202"/>
    </source>
</evidence>
<comment type="catalytic activity">
    <reaction evidence="1">
        <text>(6R)-10-formyltetrahydrofolate + 5-amino-1-(5-phospho-beta-D-ribosyl)imidazole-4-carboxamide = 5-formamido-1-(5-phospho-D-ribosyl)imidazole-4-carboxamide + (6S)-5,6,7,8-tetrahydrofolate</text>
        <dbReference type="Rhea" id="RHEA:22192"/>
        <dbReference type="ChEBI" id="CHEBI:57453"/>
        <dbReference type="ChEBI" id="CHEBI:58467"/>
        <dbReference type="ChEBI" id="CHEBI:58475"/>
        <dbReference type="ChEBI" id="CHEBI:195366"/>
        <dbReference type="EC" id="2.1.2.3"/>
    </reaction>
</comment>
<comment type="catalytic activity">
    <reaction evidence="1">
        <text>IMP + H2O = 5-formamido-1-(5-phospho-D-ribosyl)imidazole-4-carboxamide</text>
        <dbReference type="Rhea" id="RHEA:18445"/>
        <dbReference type="ChEBI" id="CHEBI:15377"/>
        <dbReference type="ChEBI" id="CHEBI:58053"/>
        <dbReference type="ChEBI" id="CHEBI:58467"/>
        <dbReference type="EC" id="3.5.4.10"/>
    </reaction>
</comment>
<comment type="pathway">
    <text evidence="1">Purine metabolism; IMP biosynthesis via de novo pathway; 5-formamido-1-(5-phospho-D-ribosyl)imidazole-4-carboxamide from 5-amino-1-(5-phospho-D-ribosyl)imidazole-4-carboxamide (10-formyl THF route): step 1/1.</text>
</comment>
<comment type="pathway">
    <text evidence="1">Purine metabolism; IMP biosynthesis via de novo pathway; IMP from 5-formamido-1-(5-phospho-D-ribosyl)imidazole-4-carboxamide: step 1/1.</text>
</comment>
<comment type="domain">
    <text evidence="1">The IMP cyclohydrolase activity resides in the N-terminal region.</text>
</comment>
<comment type="similarity">
    <text evidence="1">Belongs to the PurH family.</text>
</comment>
<feature type="chain" id="PRO_1000018869" description="Bifunctional purine biosynthesis protein PurH">
    <location>
        <begin position="1"/>
        <end position="510"/>
    </location>
</feature>
<feature type="domain" description="MGS-like" evidence="2">
    <location>
        <begin position="1"/>
        <end position="142"/>
    </location>
</feature>